<keyword id="KW-0249">Electron transport</keyword>
<keyword id="KW-0349">Heme</keyword>
<keyword id="KW-0408">Iron</keyword>
<keyword id="KW-0472">Membrane</keyword>
<keyword id="KW-0479">Metal-binding</keyword>
<keyword id="KW-0496">Mitochondrion</keyword>
<keyword id="KW-0999">Mitochondrion inner membrane</keyword>
<keyword id="KW-0679">Respiratory chain</keyword>
<keyword id="KW-0812">Transmembrane</keyword>
<keyword id="KW-1133">Transmembrane helix</keyword>
<keyword id="KW-0813">Transport</keyword>
<keyword id="KW-0830">Ubiquinone</keyword>
<sequence length="379" mass="42874">MTNIRKSHPLMKIINNAFIDLPAPSNISSWWNFGSLLGICLIFQILTGLFLAMHYTSDTTTAFSSVTHICRDVNYGWVIRYLHANGASMFFICLFIHVGRGLYYGSYMFLETWNIGVILLFTVMATAFMGYVLPWGQMSFWGATVITNLLSAIPYIGTDLVEWIWGGFSVDKATLTRFFAFHFILPFVITALAVVHLLFLHETGSNNPTGISSDMDKIPFHPYYTLKDILGALFMMLILLILVLFSPDLLGDPDNYTPANPLNTPPHIKPEWYFLFAYAILRSIPNKLGGVLALVASILILILMPMLHTSKQRSMMFRPLSQCLFWMLVADLITLTWIGGQPVEHPFIIIGQLASILYFLIILVLMPITSIIENNLLKW</sequence>
<proteinExistence type="inferred from homology"/>
<feature type="chain" id="PRO_0000254750" description="Cytochrome b">
    <location>
        <begin position="1"/>
        <end position="379"/>
    </location>
</feature>
<feature type="transmembrane region" description="Helical" evidence="2">
    <location>
        <begin position="33"/>
        <end position="53"/>
    </location>
</feature>
<feature type="transmembrane region" description="Helical" evidence="2">
    <location>
        <begin position="77"/>
        <end position="98"/>
    </location>
</feature>
<feature type="transmembrane region" description="Helical" evidence="2">
    <location>
        <begin position="113"/>
        <end position="133"/>
    </location>
</feature>
<feature type="transmembrane region" description="Helical" evidence="2">
    <location>
        <begin position="178"/>
        <end position="198"/>
    </location>
</feature>
<feature type="transmembrane region" description="Helical" evidence="2">
    <location>
        <begin position="226"/>
        <end position="246"/>
    </location>
</feature>
<feature type="transmembrane region" description="Helical" evidence="2">
    <location>
        <begin position="288"/>
        <end position="308"/>
    </location>
</feature>
<feature type="transmembrane region" description="Helical" evidence="2">
    <location>
        <begin position="320"/>
        <end position="340"/>
    </location>
</feature>
<feature type="transmembrane region" description="Helical" evidence="2">
    <location>
        <begin position="347"/>
        <end position="367"/>
    </location>
</feature>
<feature type="binding site" description="axial binding residue" evidence="2">
    <location>
        <position position="83"/>
    </location>
    <ligand>
        <name>heme b</name>
        <dbReference type="ChEBI" id="CHEBI:60344"/>
        <label>b562</label>
    </ligand>
    <ligandPart>
        <name>Fe</name>
        <dbReference type="ChEBI" id="CHEBI:18248"/>
    </ligandPart>
</feature>
<feature type="binding site" description="axial binding residue" evidence="2">
    <location>
        <position position="97"/>
    </location>
    <ligand>
        <name>heme b</name>
        <dbReference type="ChEBI" id="CHEBI:60344"/>
        <label>b566</label>
    </ligand>
    <ligandPart>
        <name>Fe</name>
        <dbReference type="ChEBI" id="CHEBI:18248"/>
    </ligandPart>
</feature>
<feature type="binding site" description="axial binding residue" evidence="2">
    <location>
        <position position="182"/>
    </location>
    <ligand>
        <name>heme b</name>
        <dbReference type="ChEBI" id="CHEBI:60344"/>
        <label>b562</label>
    </ligand>
    <ligandPart>
        <name>Fe</name>
        <dbReference type="ChEBI" id="CHEBI:18248"/>
    </ligandPart>
</feature>
<feature type="binding site" description="axial binding residue" evidence="2">
    <location>
        <position position="196"/>
    </location>
    <ligand>
        <name>heme b</name>
        <dbReference type="ChEBI" id="CHEBI:60344"/>
        <label>b566</label>
    </ligand>
    <ligandPart>
        <name>Fe</name>
        <dbReference type="ChEBI" id="CHEBI:18248"/>
    </ligandPart>
</feature>
<feature type="binding site" evidence="2">
    <location>
        <position position="201"/>
    </location>
    <ligand>
        <name>a ubiquinone</name>
        <dbReference type="ChEBI" id="CHEBI:16389"/>
    </ligand>
</feature>
<dbReference type="EMBL" id="AY534299">
    <property type="protein sequence ID" value="AAT77442.1"/>
    <property type="molecule type" value="Genomic_DNA"/>
</dbReference>
<dbReference type="SMR" id="Q5J1T4"/>
<dbReference type="GO" id="GO:0005743">
    <property type="term" value="C:mitochondrial inner membrane"/>
    <property type="evidence" value="ECO:0007669"/>
    <property type="project" value="UniProtKB-SubCell"/>
</dbReference>
<dbReference type="GO" id="GO:0045275">
    <property type="term" value="C:respiratory chain complex III"/>
    <property type="evidence" value="ECO:0007669"/>
    <property type="project" value="InterPro"/>
</dbReference>
<dbReference type="GO" id="GO:0046872">
    <property type="term" value="F:metal ion binding"/>
    <property type="evidence" value="ECO:0007669"/>
    <property type="project" value="UniProtKB-KW"/>
</dbReference>
<dbReference type="GO" id="GO:0008121">
    <property type="term" value="F:ubiquinol-cytochrome-c reductase activity"/>
    <property type="evidence" value="ECO:0007669"/>
    <property type="project" value="InterPro"/>
</dbReference>
<dbReference type="GO" id="GO:0006122">
    <property type="term" value="P:mitochondrial electron transport, ubiquinol to cytochrome c"/>
    <property type="evidence" value="ECO:0007669"/>
    <property type="project" value="TreeGrafter"/>
</dbReference>
<dbReference type="CDD" id="cd00290">
    <property type="entry name" value="cytochrome_b_C"/>
    <property type="match status" value="1"/>
</dbReference>
<dbReference type="CDD" id="cd00284">
    <property type="entry name" value="Cytochrome_b_N"/>
    <property type="match status" value="1"/>
</dbReference>
<dbReference type="FunFam" id="1.20.810.10:FF:000002">
    <property type="entry name" value="Cytochrome b"/>
    <property type="match status" value="1"/>
</dbReference>
<dbReference type="Gene3D" id="1.20.810.10">
    <property type="entry name" value="Cytochrome Bc1 Complex, Chain C"/>
    <property type="match status" value="1"/>
</dbReference>
<dbReference type="InterPro" id="IPR005798">
    <property type="entry name" value="Cyt_b/b6_C"/>
</dbReference>
<dbReference type="InterPro" id="IPR036150">
    <property type="entry name" value="Cyt_b/b6_C_sf"/>
</dbReference>
<dbReference type="InterPro" id="IPR005797">
    <property type="entry name" value="Cyt_b/b6_N"/>
</dbReference>
<dbReference type="InterPro" id="IPR027387">
    <property type="entry name" value="Cytb/b6-like_sf"/>
</dbReference>
<dbReference type="InterPro" id="IPR030689">
    <property type="entry name" value="Cytochrome_b"/>
</dbReference>
<dbReference type="InterPro" id="IPR048260">
    <property type="entry name" value="Cytochrome_b_C_euk/bac"/>
</dbReference>
<dbReference type="InterPro" id="IPR048259">
    <property type="entry name" value="Cytochrome_b_N_euk/bac"/>
</dbReference>
<dbReference type="InterPro" id="IPR016174">
    <property type="entry name" value="Di-haem_cyt_TM"/>
</dbReference>
<dbReference type="PANTHER" id="PTHR19271">
    <property type="entry name" value="CYTOCHROME B"/>
    <property type="match status" value="1"/>
</dbReference>
<dbReference type="PANTHER" id="PTHR19271:SF16">
    <property type="entry name" value="CYTOCHROME B"/>
    <property type="match status" value="1"/>
</dbReference>
<dbReference type="Pfam" id="PF00032">
    <property type="entry name" value="Cytochrom_B_C"/>
    <property type="match status" value="1"/>
</dbReference>
<dbReference type="Pfam" id="PF00033">
    <property type="entry name" value="Cytochrome_B"/>
    <property type="match status" value="1"/>
</dbReference>
<dbReference type="PIRSF" id="PIRSF038885">
    <property type="entry name" value="COB"/>
    <property type="match status" value="1"/>
</dbReference>
<dbReference type="SUPFAM" id="SSF81648">
    <property type="entry name" value="a domain/subunit of cytochrome bc1 complex (Ubiquinol-cytochrome c reductase)"/>
    <property type="match status" value="1"/>
</dbReference>
<dbReference type="SUPFAM" id="SSF81342">
    <property type="entry name" value="Transmembrane di-heme cytochromes"/>
    <property type="match status" value="1"/>
</dbReference>
<dbReference type="PROSITE" id="PS51003">
    <property type="entry name" value="CYTB_CTER"/>
    <property type="match status" value="1"/>
</dbReference>
<dbReference type="PROSITE" id="PS51002">
    <property type="entry name" value="CYTB_NTER"/>
    <property type="match status" value="1"/>
</dbReference>
<comment type="function">
    <text evidence="2">Component of the ubiquinol-cytochrome c reductase complex (complex III or cytochrome b-c1 complex) that is part of the mitochondrial respiratory chain. The b-c1 complex mediates electron transfer from ubiquinol to cytochrome c. Contributes to the generation of a proton gradient across the mitochondrial membrane that is then used for ATP synthesis.</text>
</comment>
<comment type="cofactor">
    <cofactor evidence="2">
        <name>heme b</name>
        <dbReference type="ChEBI" id="CHEBI:60344"/>
    </cofactor>
    <text evidence="2">Binds 2 heme b groups non-covalently.</text>
</comment>
<comment type="subunit">
    <text evidence="2">The cytochrome bc1 complex contains 11 subunits: 3 respiratory subunits (MT-CYB, CYC1 and UQCRFS1), 2 core proteins (UQCRC1 and UQCRC2) and 6 low-molecular weight proteins (UQCRH/QCR6, UQCRB/QCR7, UQCRQ/QCR8, UQCR10/QCR9, UQCR11/QCR10 and a cleavage product of UQCRFS1). This cytochrome bc1 complex then forms a dimer.</text>
</comment>
<comment type="subcellular location">
    <subcellularLocation>
        <location evidence="2">Mitochondrion inner membrane</location>
        <topology evidence="2">Multi-pass membrane protein</topology>
    </subcellularLocation>
</comment>
<comment type="miscellaneous">
    <text evidence="1">Heme 1 (or BL or b562) is low-potential and absorbs at about 562 nm, and heme 2 (or BH or b566) is high-potential and absorbs at about 566 nm.</text>
</comment>
<comment type="similarity">
    <text evidence="3 4">Belongs to the cytochrome b family.</text>
</comment>
<comment type="caution">
    <text evidence="2">The full-length protein contains only eight transmembrane helices, not nine as predicted by bioinformatics tools.</text>
</comment>
<reference key="1">
    <citation type="journal article" date="2005" name="J. Virol.">
        <title>Evolutionary spread and recombination of porcine endogenous retroviruses in the suiformes.</title>
        <authorList>
            <person name="Niebert M."/>
            <person name="Tonjes R.R."/>
        </authorList>
    </citation>
    <scope>NUCLEOTIDE SEQUENCE [GENOMIC DNA]</scope>
</reference>
<gene>
    <name type="primary">MT-CYB</name>
    <name type="synonym">COB</name>
    <name type="synonym">CYTB</name>
    <name type="synonym">MTCYB</name>
</gene>
<geneLocation type="mitochondrion"/>
<accession>Q5J1T4</accession>
<name>CYB_POTPR</name>
<protein>
    <recommendedName>
        <fullName>Cytochrome b</fullName>
    </recommendedName>
    <alternativeName>
        <fullName>Complex III subunit 3</fullName>
    </alternativeName>
    <alternativeName>
        <fullName>Complex III subunit III</fullName>
    </alternativeName>
    <alternativeName>
        <fullName>Cytochrome b-c1 complex subunit 3</fullName>
    </alternativeName>
    <alternativeName>
        <fullName>Ubiquinol-cytochrome-c reductase complex cytochrome b subunit</fullName>
    </alternativeName>
</protein>
<evidence type="ECO:0000250" key="1"/>
<evidence type="ECO:0000250" key="2">
    <source>
        <dbReference type="UniProtKB" id="P00157"/>
    </source>
</evidence>
<evidence type="ECO:0000255" key="3">
    <source>
        <dbReference type="PROSITE-ProRule" id="PRU00967"/>
    </source>
</evidence>
<evidence type="ECO:0000255" key="4">
    <source>
        <dbReference type="PROSITE-ProRule" id="PRU00968"/>
    </source>
</evidence>
<organism>
    <name type="scientific">Potamochoerus porcus</name>
    <name type="common">Red river hog</name>
    <dbReference type="NCBI Taxonomy" id="273791"/>
    <lineage>
        <taxon>Eukaryota</taxon>
        <taxon>Metazoa</taxon>
        <taxon>Chordata</taxon>
        <taxon>Craniata</taxon>
        <taxon>Vertebrata</taxon>
        <taxon>Euteleostomi</taxon>
        <taxon>Mammalia</taxon>
        <taxon>Eutheria</taxon>
        <taxon>Laurasiatheria</taxon>
        <taxon>Artiodactyla</taxon>
        <taxon>Suina</taxon>
        <taxon>Suidae</taxon>
        <taxon>Potamochoerus</taxon>
    </lineage>
</organism>